<reference key="1">
    <citation type="journal article" date="2009" name="PLoS Genet.">
        <title>Organised genome dynamics in the Escherichia coli species results in highly diverse adaptive paths.</title>
        <authorList>
            <person name="Touchon M."/>
            <person name="Hoede C."/>
            <person name="Tenaillon O."/>
            <person name="Barbe V."/>
            <person name="Baeriswyl S."/>
            <person name="Bidet P."/>
            <person name="Bingen E."/>
            <person name="Bonacorsi S."/>
            <person name="Bouchier C."/>
            <person name="Bouvet O."/>
            <person name="Calteau A."/>
            <person name="Chiapello H."/>
            <person name="Clermont O."/>
            <person name="Cruveiller S."/>
            <person name="Danchin A."/>
            <person name="Diard M."/>
            <person name="Dossat C."/>
            <person name="Karoui M.E."/>
            <person name="Frapy E."/>
            <person name="Garry L."/>
            <person name="Ghigo J.M."/>
            <person name="Gilles A.M."/>
            <person name="Johnson J."/>
            <person name="Le Bouguenec C."/>
            <person name="Lescat M."/>
            <person name="Mangenot S."/>
            <person name="Martinez-Jehanne V."/>
            <person name="Matic I."/>
            <person name="Nassif X."/>
            <person name="Oztas S."/>
            <person name="Petit M.A."/>
            <person name="Pichon C."/>
            <person name="Rouy Z."/>
            <person name="Ruf C.S."/>
            <person name="Schneider D."/>
            <person name="Tourret J."/>
            <person name="Vacherie B."/>
            <person name="Vallenet D."/>
            <person name="Medigue C."/>
            <person name="Rocha E.P.C."/>
            <person name="Denamur E."/>
        </authorList>
    </citation>
    <scope>NUCLEOTIDE SEQUENCE [LARGE SCALE GENOMIC DNA]</scope>
    <source>
        <strain>ED1a</strain>
    </source>
</reference>
<organism>
    <name type="scientific">Escherichia coli O81 (strain ED1a)</name>
    <dbReference type="NCBI Taxonomy" id="585397"/>
    <lineage>
        <taxon>Bacteria</taxon>
        <taxon>Pseudomonadati</taxon>
        <taxon>Pseudomonadota</taxon>
        <taxon>Gammaproteobacteria</taxon>
        <taxon>Enterobacterales</taxon>
        <taxon>Enterobacteriaceae</taxon>
        <taxon>Escherichia</taxon>
    </lineage>
</organism>
<protein>
    <recommendedName>
        <fullName evidence="1">3,4-dihydroxy-2-butanone 4-phosphate synthase</fullName>
        <shortName evidence="1">DHBP synthase</shortName>
        <ecNumber evidence="1">4.1.99.12</ecNumber>
    </recommendedName>
</protein>
<gene>
    <name evidence="1" type="primary">ribB</name>
    <name type="ordered locus">ECED1_3715</name>
</gene>
<dbReference type="EC" id="4.1.99.12" evidence="1"/>
<dbReference type="EMBL" id="CU928162">
    <property type="protein sequence ID" value="CAR09864.2"/>
    <property type="molecule type" value="Genomic_DNA"/>
</dbReference>
<dbReference type="RefSeq" id="WP_001076989.1">
    <property type="nucleotide sequence ID" value="NC_011745.1"/>
</dbReference>
<dbReference type="SMR" id="B7N0J6"/>
<dbReference type="KEGG" id="ecq:ECED1_3715"/>
<dbReference type="HOGENOM" id="CLU_020273_3_0_6"/>
<dbReference type="UniPathway" id="UPA00275">
    <property type="reaction ID" value="UER00399"/>
</dbReference>
<dbReference type="Proteomes" id="UP000000748">
    <property type="component" value="Chromosome"/>
</dbReference>
<dbReference type="GO" id="GO:0005829">
    <property type="term" value="C:cytosol"/>
    <property type="evidence" value="ECO:0007669"/>
    <property type="project" value="TreeGrafter"/>
</dbReference>
<dbReference type="GO" id="GO:0008686">
    <property type="term" value="F:3,4-dihydroxy-2-butanone-4-phosphate synthase activity"/>
    <property type="evidence" value="ECO:0007669"/>
    <property type="project" value="UniProtKB-UniRule"/>
</dbReference>
<dbReference type="GO" id="GO:0000287">
    <property type="term" value="F:magnesium ion binding"/>
    <property type="evidence" value="ECO:0007669"/>
    <property type="project" value="UniProtKB-UniRule"/>
</dbReference>
<dbReference type="GO" id="GO:0030145">
    <property type="term" value="F:manganese ion binding"/>
    <property type="evidence" value="ECO:0007669"/>
    <property type="project" value="UniProtKB-UniRule"/>
</dbReference>
<dbReference type="GO" id="GO:0009231">
    <property type="term" value="P:riboflavin biosynthetic process"/>
    <property type="evidence" value="ECO:0007669"/>
    <property type="project" value="UniProtKB-UniRule"/>
</dbReference>
<dbReference type="FunFam" id="3.90.870.10:FF:000002">
    <property type="entry name" value="3,4-dihydroxy-2-butanone 4-phosphate synthase"/>
    <property type="match status" value="1"/>
</dbReference>
<dbReference type="Gene3D" id="3.90.870.10">
    <property type="entry name" value="DHBP synthase"/>
    <property type="match status" value="1"/>
</dbReference>
<dbReference type="HAMAP" id="MF_00180">
    <property type="entry name" value="RibB"/>
    <property type="match status" value="1"/>
</dbReference>
<dbReference type="InterPro" id="IPR017945">
    <property type="entry name" value="DHBP_synth_RibB-like_a/b_dom"/>
</dbReference>
<dbReference type="InterPro" id="IPR000422">
    <property type="entry name" value="DHBP_synthase_RibB"/>
</dbReference>
<dbReference type="NCBIfam" id="TIGR00506">
    <property type="entry name" value="ribB"/>
    <property type="match status" value="1"/>
</dbReference>
<dbReference type="PANTHER" id="PTHR21327:SF38">
    <property type="entry name" value="3,4-DIHYDROXY-2-BUTANONE 4-PHOSPHATE SYNTHASE"/>
    <property type="match status" value="1"/>
</dbReference>
<dbReference type="PANTHER" id="PTHR21327">
    <property type="entry name" value="GTP CYCLOHYDROLASE II-RELATED"/>
    <property type="match status" value="1"/>
</dbReference>
<dbReference type="Pfam" id="PF00926">
    <property type="entry name" value="DHBP_synthase"/>
    <property type="match status" value="1"/>
</dbReference>
<dbReference type="SUPFAM" id="SSF55821">
    <property type="entry name" value="YrdC/RibB"/>
    <property type="match status" value="1"/>
</dbReference>
<name>RIBB_ECO81</name>
<sequence>MNQTLLSSFGTPFERVENALAALREGRGVMVLDDEDRENEGDMIFPAETMTVEQMALTIRHGSGIVCLCITDDRRKQLDLPMMVENNTSAYGTGFTVTIEAAEGVTTGVSAADRITTVRAAIADGAKPSDLNRPGHVFPLRAQAGGVLTRGGHTEATIDLMTLAGFKPAGVLCELTNDDGTMARAPECIEFANKHNMALVTIEDLVAYRQAHERKAS</sequence>
<feature type="chain" id="PRO_1000193757" description="3,4-dihydroxy-2-butanone 4-phosphate synthase">
    <location>
        <begin position="1"/>
        <end position="217"/>
    </location>
</feature>
<feature type="binding site" evidence="1">
    <location>
        <begin position="37"/>
        <end position="38"/>
    </location>
    <ligand>
        <name>D-ribulose 5-phosphate</name>
        <dbReference type="ChEBI" id="CHEBI:58121"/>
    </ligand>
</feature>
<feature type="binding site" evidence="1">
    <location>
        <position position="38"/>
    </location>
    <ligand>
        <name>Mg(2+)</name>
        <dbReference type="ChEBI" id="CHEBI:18420"/>
        <label>1</label>
    </ligand>
</feature>
<feature type="binding site" evidence="1">
    <location>
        <position position="38"/>
    </location>
    <ligand>
        <name>Mg(2+)</name>
        <dbReference type="ChEBI" id="CHEBI:18420"/>
        <label>2</label>
    </ligand>
</feature>
<feature type="binding site" evidence="1">
    <location>
        <position position="42"/>
    </location>
    <ligand>
        <name>D-ribulose 5-phosphate</name>
        <dbReference type="ChEBI" id="CHEBI:58121"/>
    </ligand>
</feature>
<feature type="binding site" evidence="1">
    <location>
        <begin position="150"/>
        <end position="154"/>
    </location>
    <ligand>
        <name>D-ribulose 5-phosphate</name>
        <dbReference type="ChEBI" id="CHEBI:58121"/>
    </ligand>
</feature>
<feature type="binding site" evidence="1">
    <location>
        <position position="153"/>
    </location>
    <ligand>
        <name>Mg(2+)</name>
        <dbReference type="ChEBI" id="CHEBI:18420"/>
        <label>2</label>
    </ligand>
</feature>
<feature type="binding site" evidence="1">
    <location>
        <position position="174"/>
    </location>
    <ligand>
        <name>D-ribulose 5-phosphate</name>
        <dbReference type="ChEBI" id="CHEBI:58121"/>
    </ligand>
</feature>
<feature type="site" description="Essential for catalytic activity" evidence="1">
    <location>
        <position position="136"/>
    </location>
</feature>
<feature type="site" description="Essential for catalytic activity" evidence="1">
    <location>
        <position position="174"/>
    </location>
</feature>
<keyword id="KW-0456">Lyase</keyword>
<keyword id="KW-0460">Magnesium</keyword>
<keyword id="KW-0464">Manganese</keyword>
<keyword id="KW-0479">Metal-binding</keyword>
<keyword id="KW-0686">Riboflavin biosynthesis</keyword>
<evidence type="ECO:0000255" key="1">
    <source>
        <dbReference type="HAMAP-Rule" id="MF_00180"/>
    </source>
</evidence>
<proteinExistence type="inferred from homology"/>
<accession>B7N0J6</accession>
<comment type="function">
    <text evidence="1">Catalyzes the conversion of D-ribulose 5-phosphate to formate and 3,4-dihydroxy-2-butanone 4-phosphate.</text>
</comment>
<comment type="catalytic activity">
    <reaction evidence="1">
        <text>D-ribulose 5-phosphate = (2S)-2-hydroxy-3-oxobutyl phosphate + formate + H(+)</text>
        <dbReference type="Rhea" id="RHEA:18457"/>
        <dbReference type="ChEBI" id="CHEBI:15378"/>
        <dbReference type="ChEBI" id="CHEBI:15740"/>
        <dbReference type="ChEBI" id="CHEBI:58121"/>
        <dbReference type="ChEBI" id="CHEBI:58830"/>
        <dbReference type="EC" id="4.1.99.12"/>
    </reaction>
</comment>
<comment type="cofactor">
    <cofactor evidence="1">
        <name>Mg(2+)</name>
        <dbReference type="ChEBI" id="CHEBI:18420"/>
    </cofactor>
    <cofactor evidence="1">
        <name>Mn(2+)</name>
        <dbReference type="ChEBI" id="CHEBI:29035"/>
    </cofactor>
    <text evidence="1">Binds 2 divalent metal cations per subunit. Magnesium or manganese.</text>
</comment>
<comment type="pathway">
    <text evidence="1">Cofactor biosynthesis; riboflavin biosynthesis; 2-hydroxy-3-oxobutyl phosphate from D-ribulose 5-phosphate: step 1/1.</text>
</comment>
<comment type="subunit">
    <text evidence="1">Homodimer.</text>
</comment>
<comment type="similarity">
    <text evidence="1">Belongs to the DHBP synthase family.</text>
</comment>